<comment type="function">
    <text evidence="1">Catalyzes the attachment of tyrosine to tRNA(Tyr) in a two-step reaction: tyrosine is first activated by ATP to form Tyr-AMP and then transferred to the acceptor end of tRNA(Tyr).</text>
</comment>
<comment type="catalytic activity">
    <reaction evidence="1">
        <text>tRNA(Tyr) + L-tyrosine + ATP = L-tyrosyl-tRNA(Tyr) + AMP + diphosphate + H(+)</text>
        <dbReference type="Rhea" id="RHEA:10220"/>
        <dbReference type="Rhea" id="RHEA-COMP:9706"/>
        <dbReference type="Rhea" id="RHEA-COMP:9707"/>
        <dbReference type="ChEBI" id="CHEBI:15378"/>
        <dbReference type="ChEBI" id="CHEBI:30616"/>
        <dbReference type="ChEBI" id="CHEBI:33019"/>
        <dbReference type="ChEBI" id="CHEBI:58315"/>
        <dbReference type="ChEBI" id="CHEBI:78442"/>
        <dbReference type="ChEBI" id="CHEBI:78536"/>
        <dbReference type="ChEBI" id="CHEBI:456215"/>
        <dbReference type="EC" id="6.1.1.1"/>
    </reaction>
</comment>
<comment type="subunit">
    <text evidence="1">Homodimer.</text>
</comment>
<comment type="subcellular location">
    <subcellularLocation>
        <location evidence="1">Cytoplasm</location>
    </subcellularLocation>
</comment>
<comment type="similarity">
    <text evidence="1">Belongs to the class-I aminoacyl-tRNA synthetase family. TyrS type 4 subfamily.</text>
</comment>
<sequence>MSIDQRLQLITRNAAEIITIDELRKKLESEEKLKGYIGFEPSGLFHIGWLIWTQKVKDLVEAGVNMTLLRATWHAWINDKLGGDLSLIKMAADYTVEVIKNYGVDTTKLNIVDADDMVKEKDYWALVIKVAKNASLARIKRALTIMGRRAEEAEIDASKLIYPAMQVSDIFYLDLDIALGGTDQRKAHMLARDVAEKMGKKKIVSIHTPLLVGLQGGQRMSITEGMEEDDIQAEIKMSKSKPESAIFVSDSREDVERKIMGAYCPKGVAENNPILQILKYIIFPRYNFVKIERDIRYGGDVEFKDYEELERAYIEGKIHPMDLKKATARRLNEILEPIRKSLERKPEFEEMIQKISKSVTR</sequence>
<accession>C3N048</accession>
<feature type="chain" id="PRO_1000216400" description="Tyrosine--tRNA ligase">
    <location>
        <begin position="1"/>
        <end position="361"/>
    </location>
</feature>
<feature type="short sequence motif" description="'KMSKS' region">
    <location>
        <begin position="236"/>
        <end position="240"/>
    </location>
</feature>
<feature type="binding site" evidence="1">
    <location>
        <position position="36"/>
    </location>
    <ligand>
        <name>L-tyrosine</name>
        <dbReference type="ChEBI" id="CHEBI:58315"/>
    </ligand>
</feature>
<feature type="binding site" evidence="1">
    <location>
        <position position="162"/>
    </location>
    <ligand>
        <name>L-tyrosine</name>
        <dbReference type="ChEBI" id="CHEBI:58315"/>
    </ligand>
</feature>
<feature type="binding site" evidence="1">
    <location>
        <position position="166"/>
    </location>
    <ligand>
        <name>L-tyrosine</name>
        <dbReference type="ChEBI" id="CHEBI:58315"/>
    </ligand>
</feature>
<feature type="binding site" evidence="1">
    <location>
        <position position="169"/>
    </location>
    <ligand>
        <name>L-tyrosine</name>
        <dbReference type="ChEBI" id="CHEBI:58315"/>
    </ligand>
</feature>
<feature type="binding site" evidence="1">
    <location>
        <position position="184"/>
    </location>
    <ligand>
        <name>L-tyrosine</name>
        <dbReference type="ChEBI" id="CHEBI:58315"/>
    </ligand>
</feature>
<feature type="binding site" evidence="1">
    <location>
        <position position="239"/>
    </location>
    <ligand>
        <name>ATP</name>
        <dbReference type="ChEBI" id="CHEBI:30616"/>
    </ligand>
</feature>
<evidence type="ECO:0000255" key="1">
    <source>
        <dbReference type="HAMAP-Rule" id="MF_02009"/>
    </source>
</evidence>
<dbReference type="EC" id="6.1.1.1" evidence="1"/>
<dbReference type="EMBL" id="CP001401">
    <property type="protein sequence ID" value="ACP55988.1"/>
    <property type="molecule type" value="Genomic_DNA"/>
</dbReference>
<dbReference type="RefSeq" id="WP_012714152.1">
    <property type="nucleotide sequence ID" value="NC_012632.1"/>
</dbReference>
<dbReference type="SMR" id="C3N048"/>
<dbReference type="KEGG" id="sim:M1627_2122"/>
<dbReference type="HOGENOM" id="CLU_035267_1_1_2"/>
<dbReference type="Proteomes" id="UP000002307">
    <property type="component" value="Chromosome"/>
</dbReference>
<dbReference type="GO" id="GO:0005737">
    <property type="term" value="C:cytoplasm"/>
    <property type="evidence" value="ECO:0007669"/>
    <property type="project" value="UniProtKB-SubCell"/>
</dbReference>
<dbReference type="GO" id="GO:0005524">
    <property type="term" value="F:ATP binding"/>
    <property type="evidence" value="ECO:0007669"/>
    <property type="project" value="UniProtKB-UniRule"/>
</dbReference>
<dbReference type="GO" id="GO:0004831">
    <property type="term" value="F:tyrosine-tRNA ligase activity"/>
    <property type="evidence" value="ECO:0007669"/>
    <property type="project" value="UniProtKB-UniRule"/>
</dbReference>
<dbReference type="GO" id="GO:0006437">
    <property type="term" value="P:tyrosyl-tRNA aminoacylation"/>
    <property type="evidence" value="ECO:0007669"/>
    <property type="project" value="UniProtKB-UniRule"/>
</dbReference>
<dbReference type="CDD" id="cd00805">
    <property type="entry name" value="TyrRS_core"/>
    <property type="match status" value="1"/>
</dbReference>
<dbReference type="Gene3D" id="3.40.50.620">
    <property type="entry name" value="HUPs"/>
    <property type="match status" value="1"/>
</dbReference>
<dbReference type="Gene3D" id="1.10.240.10">
    <property type="entry name" value="Tyrosyl-Transfer RNA Synthetase"/>
    <property type="match status" value="1"/>
</dbReference>
<dbReference type="HAMAP" id="MF_02009">
    <property type="entry name" value="Tyr_tRNA_synth_type4"/>
    <property type="match status" value="1"/>
</dbReference>
<dbReference type="InterPro" id="IPR002305">
    <property type="entry name" value="aa-tRNA-synth_Ic"/>
</dbReference>
<dbReference type="InterPro" id="IPR014729">
    <property type="entry name" value="Rossmann-like_a/b/a_fold"/>
</dbReference>
<dbReference type="InterPro" id="IPR002307">
    <property type="entry name" value="Tyr-tRNA-ligase"/>
</dbReference>
<dbReference type="InterPro" id="IPR023678">
    <property type="entry name" value="Tyr-tRNA-ligase_4"/>
</dbReference>
<dbReference type="InterPro" id="IPR023617">
    <property type="entry name" value="Tyr-tRNA-ligase_arc/euk-type"/>
</dbReference>
<dbReference type="InterPro" id="IPR050489">
    <property type="entry name" value="Tyr-tRNA_synthase"/>
</dbReference>
<dbReference type="NCBIfam" id="NF006330">
    <property type="entry name" value="PRK08560.1"/>
    <property type="match status" value="1"/>
</dbReference>
<dbReference type="NCBIfam" id="TIGR00234">
    <property type="entry name" value="tyrS"/>
    <property type="match status" value="1"/>
</dbReference>
<dbReference type="PANTHER" id="PTHR46264:SF4">
    <property type="entry name" value="TYROSINE--TRNA LIGASE, CYTOPLASMIC"/>
    <property type="match status" value="1"/>
</dbReference>
<dbReference type="PANTHER" id="PTHR46264">
    <property type="entry name" value="TYROSINE-TRNA LIGASE"/>
    <property type="match status" value="1"/>
</dbReference>
<dbReference type="Pfam" id="PF00579">
    <property type="entry name" value="tRNA-synt_1b"/>
    <property type="match status" value="1"/>
</dbReference>
<dbReference type="PIRSF" id="PIRSF006588">
    <property type="entry name" value="TyrRS_arch_euk"/>
    <property type="match status" value="1"/>
</dbReference>
<dbReference type="PRINTS" id="PR01040">
    <property type="entry name" value="TRNASYNTHTYR"/>
</dbReference>
<dbReference type="SUPFAM" id="SSF52374">
    <property type="entry name" value="Nucleotidylyl transferase"/>
    <property type="match status" value="1"/>
</dbReference>
<gene>
    <name evidence="1" type="primary">tyrS</name>
    <name type="ordered locus">M1627_2122</name>
</gene>
<keyword id="KW-0030">Aminoacyl-tRNA synthetase</keyword>
<keyword id="KW-0067">ATP-binding</keyword>
<keyword id="KW-0963">Cytoplasm</keyword>
<keyword id="KW-0436">Ligase</keyword>
<keyword id="KW-0547">Nucleotide-binding</keyword>
<keyword id="KW-0648">Protein biosynthesis</keyword>
<protein>
    <recommendedName>
        <fullName evidence="1">Tyrosine--tRNA ligase</fullName>
        <ecNumber evidence="1">6.1.1.1</ecNumber>
    </recommendedName>
    <alternativeName>
        <fullName evidence="1">Tyrosyl-tRNA synthetase</fullName>
        <shortName evidence="1">TyrRS</shortName>
    </alternativeName>
</protein>
<name>SYY_SACI3</name>
<reference key="1">
    <citation type="journal article" date="2009" name="Proc. Natl. Acad. Sci. U.S.A.">
        <title>Biogeography of the Sulfolobus islandicus pan-genome.</title>
        <authorList>
            <person name="Reno M.L."/>
            <person name="Held N.L."/>
            <person name="Fields C.J."/>
            <person name="Burke P.V."/>
            <person name="Whitaker R.J."/>
        </authorList>
    </citation>
    <scope>NUCLEOTIDE SEQUENCE [LARGE SCALE GENOMIC DNA]</scope>
    <source>
        <strain>M.16.27</strain>
    </source>
</reference>
<organism>
    <name type="scientific">Saccharolobus islandicus (strain M.16.27)</name>
    <name type="common">Sulfolobus islandicus</name>
    <dbReference type="NCBI Taxonomy" id="427318"/>
    <lineage>
        <taxon>Archaea</taxon>
        <taxon>Thermoproteota</taxon>
        <taxon>Thermoprotei</taxon>
        <taxon>Sulfolobales</taxon>
        <taxon>Sulfolobaceae</taxon>
        <taxon>Saccharolobus</taxon>
    </lineage>
</organism>
<proteinExistence type="inferred from homology"/>